<organism>
    <name type="scientific">Mus musculus</name>
    <name type="common">Mouse</name>
    <dbReference type="NCBI Taxonomy" id="10090"/>
    <lineage>
        <taxon>Eukaryota</taxon>
        <taxon>Metazoa</taxon>
        <taxon>Chordata</taxon>
        <taxon>Craniata</taxon>
        <taxon>Vertebrata</taxon>
        <taxon>Euteleostomi</taxon>
        <taxon>Mammalia</taxon>
        <taxon>Eutheria</taxon>
        <taxon>Euarchontoglires</taxon>
        <taxon>Glires</taxon>
        <taxon>Rodentia</taxon>
        <taxon>Myomorpha</taxon>
        <taxon>Muroidea</taxon>
        <taxon>Muridae</taxon>
        <taxon>Murinae</taxon>
        <taxon>Mus</taxon>
        <taxon>Mus</taxon>
    </lineage>
</organism>
<reference key="1">
    <citation type="journal article" date="2005" name="Science">
        <title>The transcriptional landscape of the mammalian genome.</title>
        <authorList>
            <person name="Carninci P."/>
            <person name="Kasukawa T."/>
            <person name="Katayama S."/>
            <person name="Gough J."/>
            <person name="Frith M.C."/>
            <person name="Maeda N."/>
            <person name="Oyama R."/>
            <person name="Ravasi T."/>
            <person name="Lenhard B."/>
            <person name="Wells C."/>
            <person name="Kodzius R."/>
            <person name="Shimokawa K."/>
            <person name="Bajic V.B."/>
            <person name="Brenner S.E."/>
            <person name="Batalov S."/>
            <person name="Forrest A.R."/>
            <person name="Zavolan M."/>
            <person name="Davis M.J."/>
            <person name="Wilming L.G."/>
            <person name="Aidinis V."/>
            <person name="Allen J.E."/>
            <person name="Ambesi-Impiombato A."/>
            <person name="Apweiler R."/>
            <person name="Aturaliya R.N."/>
            <person name="Bailey T.L."/>
            <person name="Bansal M."/>
            <person name="Baxter L."/>
            <person name="Beisel K.W."/>
            <person name="Bersano T."/>
            <person name="Bono H."/>
            <person name="Chalk A.M."/>
            <person name="Chiu K.P."/>
            <person name="Choudhary V."/>
            <person name="Christoffels A."/>
            <person name="Clutterbuck D.R."/>
            <person name="Crowe M.L."/>
            <person name="Dalla E."/>
            <person name="Dalrymple B.P."/>
            <person name="de Bono B."/>
            <person name="Della Gatta G."/>
            <person name="di Bernardo D."/>
            <person name="Down T."/>
            <person name="Engstrom P."/>
            <person name="Fagiolini M."/>
            <person name="Faulkner G."/>
            <person name="Fletcher C.F."/>
            <person name="Fukushima T."/>
            <person name="Furuno M."/>
            <person name="Futaki S."/>
            <person name="Gariboldi M."/>
            <person name="Georgii-Hemming P."/>
            <person name="Gingeras T.R."/>
            <person name="Gojobori T."/>
            <person name="Green R.E."/>
            <person name="Gustincich S."/>
            <person name="Harbers M."/>
            <person name="Hayashi Y."/>
            <person name="Hensch T.K."/>
            <person name="Hirokawa N."/>
            <person name="Hill D."/>
            <person name="Huminiecki L."/>
            <person name="Iacono M."/>
            <person name="Ikeo K."/>
            <person name="Iwama A."/>
            <person name="Ishikawa T."/>
            <person name="Jakt M."/>
            <person name="Kanapin A."/>
            <person name="Katoh M."/>
            <person name="Kawasawa Y."/>
            <person name="Kelso J."/>
            <person name="Kitamura H."/>
            <person name="Kitano H."/>
            <person name="Kollias G."/>
            <person name="Krishnan S.P."/>
            <person name="Kruger A."/>
            <person name="Kummerfeld S.K."/>
            <person name="Kurochkin I.V."/>
            <person name="Lareau L.F."/>
            <person name="Lazarevic D."/>
            <person name="Lipovich L."/>
            <person name="Liu J."/>
            <person name="Liuni S."/>
            <person name="McWilliam S."/>
            <person name="Madan Babu M."/>
            <person name="Madera M."/>
            <person name="Marchionni L."/>
            <person name="Matsuda H."/>
            <person name="Matsuzawa S."/>
            <person name="Miki H."/>
            <person name="Mignone F."/>
            <person name="Miyake S."/>
            <person name="Morris K."/>
            <person name="Mottagui-Tabar S."/>
            <person name="Mulder N."/>
            <person name="Nakano N."/>
            <person name="Nakauchi H."/>
            <person name="Ng P."/>
            <person name="Nilsson R."/>
            <person name="Nishiguchi S."/>
            <person name="Nishikawa S."/>
            <person name="Nori F."/>
            <person name="Ohara O."/>
            <person name="Okazaki Y."/>
            <person name="Orlando V."/>
            <person name="Pang K.C."/>
            <person name="Pavan W.J."/>
            <person name="Pavesi G."/>
            <person name="Pesole G."/>
            <person name="Petrovsky N."/>
            <person name="Piazza S."/>
            <person name="Reed J."/>
            <person name="Reid J.F."/>
            <person name="Ring B.Z."/>
            <person name="Ringwald M."/>
            <person name="Rost B."/>
            <person name="Ruan Y."/>
            <person name="Salzberg S.L."/>
            <person name="Sandelin A."/>
            <person name="Schneider C."/>
            <person name="Schoenbach C."/>
            <person name="Sekiguchi K."/>
            <person name="Semple C.A."/>
            <person name="Seno S."/>
            <person name="Sessa L."/>
            <person name="Sheng Y."/>
            <person name="Shibata Y."/>
            <person name="Shimada H."/>
            <person name="Shimada K."/>
            <person name="Silva D."/>
            <person name="Sinclair B."/>
            <person name="Sperling S."/>
            <person name="Stupka E."/>
            <person name="Sugiura K."/>
            <person name="Sultana R."/>
            <person name="Takenaka Y."/>
            <person name="Taki K."/>
            <person name="Tammoja K."/>
            <person name="Tan S.L."/>
            <person name="Tang S."/>
            <person name="Taylor M.S."/>
            <person name="Tegner J."/>
            <person name="Teichmann S.A."/>
            <person name="Ueda H.R."/>
            <person name="van Nimwegen E."/>
            <person name="Verardo R."/>
            <person name="Wei C.L."/>
            <person name="Yagi K."/>
            <person name="Yamanishi H."/>
            <person name="Zabarovsky E."/>
            <person name="Zhu S."/>
            <person name="Zimmer A."/>
            <person name="Hide W."/>
            <person name="Bult C."/>
            <person name="Grimmond S.M."/>
            <person name="Teasdale R.D."/>
            <person name="Liu E.T."/>
            <person name="Brusic V."/>
            <person name="Quackenbush J."/>
            <person name="Wahlestedt C."/>
            <person name="Mattick J.S."/>
            <person name="Hume D.A."/>
            <person name="Kai C."/>
            <person name="Sasaki D."/>
            <person name="Tomaru Y."/>
            <person name="Fukuda S."/>
            <person name="Kanamori-Katayama M."/>
            <person name="Suzuki M."/>
            <person name="Aoki J."/>
            <person name="Arakawa T."/>
            <person name="Iida J."/>
            <person name="Imamura K."/>
            <person name="Itoh M."/>
            <person name="Kato T."/>
            <person name="Kawaji H."/>
            <person name="Kawagashira N."/>
            <person name="Kawashima T."/>
            <person name="Kojima M."/>
            <person name="Kondo S."/>
            <person name="Konno H."/>
            <person name="Nakano K."/>
            <person name="Ninomiya N."/>
            <person name="Nishio T."/>
            <person name="Okada M."/>
            <person name="Plessy C."/>
            <person name="Shibata K."/>
            <person name="Shiraki T."/>
            <person name="Suzuki S."/>
            <person name="Tagami M."/>
            <person name="Waki K."/>
            <person name="Watahiki A."/>
            <person name="Okamura-Oho Y."/>
            <person name="Suzuki H."/>
            <person name="Kawai J."/>
            <person name="Hayashizaki Y."/>
        </authorList>
    </citation>
    <scope>NUCLEOTIDE SEQUENCE [LARGE SCALE MRNA] (ISOFORMS 1; 2; 3 AND 6)</scope>
    <source>
        <strain>C57BL/6J</strain>
        <tissue>Corpora quadrigemina</tissue>
        <tissue>Head</tissue>
        <tissue>Retina</tissue>
    </source>
</reference>
<reference key="2">
    <citation type="journal article" date="2004" name="Genome Res.">
        <title>The status, quality, and expansion of the NIH full-length cDNA project: the Mammalian Gene Collection (MGC).</title>
        <authorList>
            <consortium name="The MGC Project Team"/>
        </authorList>
    </citation>
    <scope>NUCLEOTIDE SEQUENCE [LARGE SCALE MRNA] (ISOFORM 4)</scope>
    <source>
        <strain>C57BL/6J</strain>
        <tissue>Brain</tissue>
    </source>
</reference>
<reference key="3">
    <citation type="journal article" date="2019" name="Nat. Cell Biol.">
        <title>The nucleoskeleton protein IFFO1 immobilizes broken DNA and suppresses chromosome translocation during tumorigenesis.</title>
        <authorList>
            <person name="Li W."/>
            <person name="Bai X."/>
            <person name="Li J."/>
            <person name="Zhao Y."/>
            <person name="Liu J."/>
            <person name="Zhao H."/>
            <person name="Liu L."/>
            <person name="Ding M."/>
            <person name="Wang Q."/>
            <person name="Shi F.Y."/>
            <person name="Hou M."/>
            <person name="Ji J."/>
            <person name="Gao G."/>
            <person name="Guo R."/>
            <person name="Sun Y."/>
            <person name="Liu Y."/>
            <person name="Xu D."/>
        </authorList>
    </citation>
    <scope>FUNCTION</scope>
</reference>
<evidence type="ECO:0000250" key="1">
    <source>
        <dbReference type="UniProtKB" id="Q0D2I5"/>
    </source>
</evidence>
<evidence type="ECO:0000255" key="2"/>
<evidence type="ECO:0000255" key="3">
    <source>
        <dbReference type="PROSITE-ProRule" id="PRU01188"/>
    </source>
</evidence>
<evidence type="ECO:0000256" key="4">
    <source>
        <dbReference type="SAM" id="MobiDB-lite"/>
    </source>
</evidence>
<evidence type="ECO:0000269" key="5">
    <source>
    </source>
</evidence>
<evidence type="ECO:0000303" key="6">
    <source>
    </source>
</evidence>
<evidence type="ECO:0000303" key="7">
    <source>
    </source>
</evidence>
<evidence type="ECO:0000303" key="8">
    <source>
    </source>
</evidence>
<evidence type="ECO:0000305" key="9"/>
<evidence type="ECO:0000312" key="10">
    <source>
        <dbReference type="MGI" id="MGI:2444516"/>
    </source>
</evidence>
<proteinExistence type="evidence at transcript level"/>
<sequence length="562" mass="62415">MNPLFGPNLFLLQQEQQGLAGPLGDPLGGDHFAGGGDLASAPLASAGPSAYSPPGPGPAPPAAMALRNDLGSNINVLKTLNLRFRCFLAKVHELERRNRLLEKQLQQALEEGKQGRRGLARRDQAVQTGFISPIRPLGLPLSSRPAAVCPPSARVLGSPSRSPAGPLASSAACHTSSSTSTSTAFSSSTRFMPGTIWSFSHARRLGPGLEPTLVQGPGLSWVHPDGVGVQIDTITPEIRALYNVLAKVKRERDEYKRRWEEEYTVRIQLQERVTELQEEAQEADACQEELAMKVEQLKAELVVFKGLMSNNLTELDTKIQEKAMKVDMDICRRIDITAKLCDLAQQRNCEDMIQMFQKKLVPSMGGRKRERKAAVEEDTSLSESDGPRQPEGAEEESTALSINEEMQRMLSQLREYDFEDDCDSLTWEETEETLLLWEDFSGYAMAAAEAQGEQEDSLEKVIKDTESLFKTREKEYQETIDQIELELATAKNDMNRHLHEYMEMCSMKRGLDVQMETCRRLITQSGDRKSPAFTAVPLSDPPPPPSETEDSDRDVSSDSSMR</sequence>
<feature type="chain" id="PRO_0000316795" description="Non-homologous end joining factor IFFO1">
    <location>
        <begin position="1"/>
        <end position="562"/>
    </location>
</feature>
<feature type="domain" description="IF rod" evidence="3">
    <location>
        <begin position="73"/>
        <end position="529"/>
    </location>
</feature>
<feature type="region of interest" description="LMNA binding" evidence="1">
    <location>
        <begin position="65"/>
        <end position="116"/>
    </location>
</feature>
<feature type="region of interest" description="Disordered" evidence="4">
    <location>
        <begin position="154"/>
        <end position="187"/>
    </location>
</feature>
<feature type="region of interest" description="Disordered" evidence="4">
    <location>
        <begin position="364"/>
        <end position="401"/>
    </location>
</feature>
<feature type="region of interest" description="XCCR4 binding. Required for localization to the double-strand breaks (DSBs)" evidence="1">
    <location>
        <begin position="453"/>
        <end position="528"/>
    </location>
</feature>
<feature type="region of interest" description="Disordered" evidence="4">
    <location>
        <begin position="523"/>
        <end position="562"/>
    </location>
</feature>
<feature type="coiled-coil region" evidence="2">
    <location>
        <begin position="85"/>
        <end position="117"/>
    </location>
</feature>
<feature type="coiled-coil region" evidence="2">
    <location>
        <begin position="237"/>
        <end position="301"/>
    </location>
</feature>
<feature type="coiled-coil region" evidence="2">
    <location>
        <begin position="458"/>
        <end position="504"/>
    </location>
</feature>
<feature type="compositionally biased region" description="Low complexity" evidence="4">
    <location>
        <begin position="168"/>
        <end position="187"/>
    </location>
</feature>
<feature type="compositionally biased region" description="Basic and acidic residues" evidence="4">
    <location>
        <begin position="553"/>
        <end position="562"/>
    </location>
</feature>
<feature type="splice variant" id="VSP_030785" description="In isoform 3 and isoform 4." evidence="6 7">
    <location>
        <begin position="1"/>
        <end position="191"/>
    </location>
</feature>
<feature type="splice variant" id="VSP_030786" description="In isoform 2." evidence="7">
    <location>
        <begin position="259"/>
        <end position="562"/>
    </location>
</feature>
<feature type="splice variant" id="VSP_030787" description="In isoform 3 and isoform 5." evidence="7">
    <location>
        <begin position="358"/>
        <end position="360"/>
    </location>
</feature>
<feature type="splice variant" id="VSP_030788" description="In isoform 4 and isoform 6." evidence="6 7">
    <location>
        <position position="358"/>
    </location>
</feature>
<feature type="sequence conflict" description="In Ref. 1; BAC25852." evidence="9" ref="1">
    <original>A</original>
    <variation>P</variation>
    <location>
        <position position="291"/>
    </location>
</feature>
<feature type="sequence conflict" description="In Ref. 1; BAC25852." evidence="9" ref="1">
    <original>C</original>
    <variation>W</variation>
    <location>
        <position position="331"/>
    </location>
</feature>
<feature type="sequence conflict" description="In Ref. 1; BAC25852." evidence="9" ref="1">
    <original>Q</original>
    <variation>H</variation>
    <location>
        <position position="345"/>
    </location>
</feature>
<feature type="sequence conflict" description="In Ref. 1; BAC25852 and 2; AAH57601." evidence="9" ref="1 2">
    <original>Q</original>
    <variation>QQ</variation>
    <location>
        <position position="454"/>
    </location>
</feature>
<dbReference type="EMBL" id="AK028273">
    <property type="protein sequence ID" value="BAC25852.1"/>
    <property type="molecule type" value="mRNA"/>
</dbReference>
<dbReference type="EMBL" id="AK044382">
    <property type="protein sequence ID" value="BAC31894.1"/>
    <property type="molecule type" value="mRNA"/>
</dbReference>
<dbReference type="EMBL" id="AK044728">
    <property type="protein sequence ID" value="BAC32053.1"/>
    <property type="molecule type" value="mRNA"/>
</dbReference>
<dbReference type="EMBL" id="AK163571">
    <property type="protein sequence ID" value="BAE37401.1"/>
    <property type="molecule type" value="mRNA"/>
</dbReference>
<dbReference type="EMBL" id="BC057601">
    <property type="protein sequence ID" value="AAH57601.2"/>
    <property type="molecule type" value="mRNA"/>
</dbReference>
<dbReference type="CCDS" id="CCDS39634.1">
    <molecule id="Q8BXL9-1"/>
</dbReference>
<dbReference type="CCDS" id="CCDS39635.1">
    <molecule id="Q8BXL9-5"/>
</dbReference>
<dbReference type="RefSeq" id="NP_001034758.1">
    <molecule id="Q8BXL9-1"/>
    <property type="nucleotide sequence ID" value="NM_001039669.3"/>
</dbReference>
<dbReference type="RefSeq" id="NP_001289707.1">
    <property type="nucleotide sequence ID" value="NM_001302778.1"/>
</dbReference>
<dbReference type="RefSeq" id="NP_001289708.1">
    <property type="nucleotide sequence ID" value="NM_001302779.1"/>
</dbReference>
<dbReference type="RefSeq" id="NP_848902.4">
    <molecule id="Q8BXL9-5"/>
    <property type="nucleotide sequence ID" value="NM_178787.6"/>
</dbReference>
<dbReference type="RefSeq" id="XP_030111324.1">
    <molecule id="Q8BXL9-6"/>
    <property type="nucleotide sequence ID" value="XM_030255464.1"/>
</dbReference>
<dbReference type="SMR" id="Q8BXL9"/>
<dbReference type="BioGRID" id="236208">
    <property type="interactions" value="9"/>
</dbReference>
<dbReference type="FunCoup" id="Q8BXL9">
    <property type="interactions" value="1286"/>
</dbReference>
<dbReference type="STRING" id="10090.ENSMUSP00000113088"/>
<dbReference type="GlyGen" id="Q8BXL9">
    <property type="glycosylation" value="6 sites, 1 N-linked glycan (1 site), 1 O-linked glycan (5 sites)"/>
</dbReference>
<dbReference type="iPTMnet" id="Q8BXL9"/>
<dbReference type="PhosphoSitePlus" id="Q8BXL9"/>
<dbReference type="jPOST" id="Q8BXL9"/>
<dbReference type="PaxDb" id="10090-ENSMUSP00000056373"/>
<dbReference type="ProteomicsDB" id="267266">
    <molecule id="Q8BXL9-1"/>
</dbReference>
<dbReference type="ProteomicsDB" id="267267">
    <molecule id="Q8BXL9-2"/>
</dbReference>
<dbReference type="ProteomicsDB" id="267268">
    <molecule id="Q8BXL9-3"/>
</dbReference>
<dbReference type="ProteomicsDB" id="267269">
    <molecule id="Q8BXL9-4"/>
</dbReference>
<dbReference type="ProteomicsDB" id="267270">
    <molecule id="Q8BXL9-5"/>
</dbReference>
<dbReference type="ProteomicsDB" id="267271">
    <molecule id="Q8BXL9-6"/>
</dbReference>
<dbReference type="Antibodypedia" id="22511">
    <property type="antibodies" value="62 antibodies from 18 providers"/>
</dbReference>
<dbReference type="DNASU" id="320678"/>
<dbReference type="Ensembl" id="ENSMUST00000117675.8">
    <molecule id="Q8BXL9-1"/>
    <property type="protein sequence ID" value="ENSMUSP00000113088.3"/>
    <property type="gene ID" value="ENSMUSG00000038271.18"/>
</dbReference>
<dbReference type="Ensembl" id="ENSMUST00000119527.8">
    <molecule id="Q8BXL9-5"/>
    <property type="protein sequence ID" value="ENSMUSP00000113376.3"/>
    <property type="gene ID" value="ENSMUSG00000038271.18"/>
</dbReference>
<dbReference type="GeneID" id="320678"/>
<dbReference type="KEGG" id="mmu:320678"/>
<dbReference type="UCSC" id="uc009dto.2">
    <molecule id="Q8BXL9-1"/>
    <property type="organism name" value="mouse"/>
</dbReference>
<dbReference type="UCSC" id="uc009dtp.2">
    <molecule id="Q8BXL9-5"/>
    <property type="organism name" value="mouse"/>
</dbReference>
<dbReference type="UCSC" id="uc009dtq.2">
    <molecule id="Q8BXL9-6"/>
    <property type="organism name" value="mouse"/>
</dbReference>
<dbReference type="AGR" id="MGI:2444516"/>
<dbReference type="CTD" id="25900"/>
<dbReference type="MGI" id="MGI:2444516">
    <property type="gene designation" value="Iffo1"/>
</dbReference>
<dbReference type="VEuPathDB" id="HostDB:ENSMUSG00000038271"/>
<dbReference type="eggNOG" id="ENOG502QRD7">
    <property type="taxonomic scope" value="Eukaryota"/>
</dbReference>
<dbReference type="GeneTree" id="ENSGT00510000046803"/>
<dbReference type="HOGENOM" id="CLU_039629_2_1_1"/>
<dbReference type="InParanoid" id="Q8BXL9"/>
<dbReference type="OMA" id="CETQVNS"/>
<dbReference type="OrthoDB" id="9946830at2759"/>
<dbReference type="PhylomeDB" id="Q8BXL9"/>
<dbReference type="TreeFam" id="TF331217"/>
<dbReference type="BioGRID-ORCS" id="320678">
    <property type="hits" value="3 hits in 79 CRISPR screens"/>
</dbReference>
<dbReference type="ChiTaRS" id="Iffo1">
    <property type="organism name" value="mouse"/>
</dbReference>
<dbReference type="PRO" id="PR:Q8BXL9"/>
<dbReference type="Proteomes" id="UP000000589">
    <property type="component" value="Chromosome 6"/>
</dbReference>
<dbReference type="RNAct" id="Q8BXL9">
    <property type="molecule type" value="protein"/>
</dbReference>
<dbReference type="Bgee" id="ENSMUSG00000038271">
    <property type="expression patterns" value="Expressed in retinal neural layer and 216 other cell types or tissues"/>
</dbReference>
<dbReference type="ExpressionAtlas" id="Q8BXL9">
    <property type="expression patterns" value="baseline and differential"/>
</dbReference>
<dbReference type="GO" id="GO:0005882">
    <property type="term" value="C:intermediate filament"/>
    <property type="evidence" value="ECO:0007669"/>
    <property type="project" value="UniProtKB-KW"/>
</dbReference>
<dbReference type="GO" id="GO:0005637">
    <property type="term" value="C:nuclear inner membrane"/>
    <property type="evidence" value="ECO:0007669"/>
    <property type="project" value="UniProtKB-SubCell"/>
</dbReference>
<dbReference type="GO" id="GO:0016363">
    <property type="term" value="C:nuclear matrix"/>
    <property type="evidence" value="ECO:0000250"/>
    <property type="project" value="UniProtKB"/>
</dbReference>
<dbReference type="GO" id="GO:0005654">
    <property type="term" value="C:nucleoplasm"/>
    <property type="evidence" value="ECO:0000250"/>
    <property type="project" value="UniProtKB"/>
</dbReference>
<dbReference type="GO" id="GO:1990683">
    <property type="term" value="P:DNA double-strand break attachment to nuclear envelope"/>
    <property type="evidence" value="ECO:0000250"/>
    <property type="project" value="UniProtKB"/>
</dbReference>
<dbReference type="GO" id="GO:0006303">
    <property type="term" value="P:double-strand break repair via nonhomologous end joining"/>
    <property type="evidence" value="ECO:0000250"/>
    <property type="project" value="UniProtKB"/>
</dbReference>
<dbReference type="Gene3D" id="1.20.5.170">
    <property type="match status" value="1"/>
</dbReference>
<dbReference type="Gene3D" id="1.20.5.1160">
    <property type="entry name" value="Vasodilator-stimulated phosphoprotein"/>
    <property type="match status" value="1"/>
</dbReference>
<dbReference type="InterPro" id="IPR039008">
    <property type="entry name" value="IF_rod_dom"/>
</dbReference>
<dbReference type="PANTHER" id="PTHR14516">
    <property type="entry name" value="1-PYRROLINE-5-CARBOXYLATE DEHYDROGENASE FAMILY MEMBER"/>
    <property type="match status" value="1"/>
</dbReference>
<dbReference type="PANTHER" id="PTHR14516:SF2">
    <property type="entry name" value="NON-HOMOLOGOUS END JOINING FACTOR IFFO1"/>
    <property type="match status" value="1"/>
</dbReference>
<dbReference type="SMART" id="SM01391">
    <property type="entry name" value="Filament"/>
    <property type="match status" value="1"/>
</dbReference>
<dbReference type="SUPFAM" id="SSF64593">
    <property type="entry name" value="Intermediate filament protein, coiled coil region"/>
    <property type="match status" value="1"/>
</dbReference>
<dbReference type="PROSITE" id="PS51842">
    <property type="entry name" value="IF_ROD_2"/>
    <property type="match status" value="1"/>
</dbReference>
<keyword id="KW-0025">Alternative splicing</keyword>
<keyword id="KW-0175">Coiled coil</keyword>
<keyword id="KW-0403">Intermediate filament</keyword>
<keyword id="KW-0472">Membrane</keyword>
<keyword id="KW-0539">Nucleus</keyword>
<keyword id="KW-1185">Reference proteome</keyword>
<name>IFFO1_MOUSE</name>
<protein>
    <recommendedName>
        <fullName evidence="8">Non-homologous end joining factor IFFO1</fullName>
        <shortName evidence="8">NHEJ factor IFFO1</shortName>
    </recommendedName>
    <alternativeName>
        <fullName evidence="8">Intermediate filament family orphan 1</fullName>
    </alternativeName>
</protein>
<gene>
    <name evidence="10" type="primary">Iffo1</name>
    <name type="synonym">Iffo</name>
</gene>
<comment type="function">
    <text evidence="5">Nuclear matrix protein involved in the immobilization of broken DNA ends and the suppression of chromosome translocation during DNA double-strand breaks (DSBs) (PubMed:31548606). Interacts with the nuclear lamina component LMNA, resulting in the formation of a nucleoskeleton that will relocalize to the DSB sites in a XRCC4-dependent manner and promote the immobilization of the broken ends, thereby preventing chromosome translocation (PubMed:31548606). Acts as a scaffold that allows the DNA repair protein XRCC4 and LMNA to assemble into a complex at the DSB sites (PubMed:31548606).</text>
</comment>
<comment type="subunit">
    <text evidence="1">Forms a heterotetramer with XRCC4 (By similarity). The interaction with XRCC4 is direct, involves LIG4-free XRCC4 and leads to relocalization of IFFO1 at the double-strand break (DSB) sites (By similarity). Interacts with LMNA; the interaction forms an interior nucleoskeleton and the recruitment to DNA double-strand breaks (By similarity).</text>
</comment>
<comment type="subcellular location">
    <subcellularLocation>
        <location evidence="1">Nucleus</location>
    </subcellularLocation>
    <subcellularLocation>
        <location evidence="1">Nucleus</location>
        <location evidence="1">Nucleoplasm</location>
    </subcellularLocation>
    <subcellularLocation>
        <location evidence="1">Nucleus inner membrane</location>
    </subcellularLocation>
    <subcellularLocation>
        <location evidence="1">Nucleus matrix</location>
    </subcellularLocation>
    <text evidence="1">Mainly soluble, the remaining is localized in the nuclear matrix. Localized at double-strand break (DSB) sites near the lamina and nuclear matrix structures.</text>
</comment>
<comment type="alternative products">
    <event type="alternative splicing"/>
    <isoform>
        <id>Q8BXL9-1</id>
        <name>1</name>
        <sequence type="displayed"/>
    </isoform>
    <isoform>
        <id>Q8BXL9-2</id>
        <name>2</name>
        <sequence type="described" ref="VSP_030786"/>
    </isoform>
    <isoform>
        <id>Q8BXL9-3</id>
        <name>3</name>
        <sequence type="described" ref="VSP_030785 VSP_030787"/>
    </isoform>
    <isoform>
        <id>Q8BXL9-4</id>
        <name>4</name>
        <sequence type="described" ref="VSP_030785 VSP_030788"/>
    </isoform>
    <isoform>
        <id>Q8BXL9-5</id>
        <name>5</name>
        <sequence type="described" ref="VSP_030787"/>
    </isoform>
    <isoform>
        <id>Q8BXL9-6</id>
        <name>6</name>
        <sequence type="described" ref="VSP_030788"/>
    </isoform>
</comment>
<comment type="similarity">
    <text evidence="3">Belongs to the intermediate filament family.</text>
</comment>
<accession>Q8BXL9</accession>
<accession>Q3TQI1</accession>
<accession>Q6PFE6</accession>
<accession>Q8BXS3</accession>
<accession>Q8C1D6</accession>